<dbReference type="EMBL" id="U09813">
    <property type="protein sequence ID" value="AAA78807.1"/>
    <property type="molecule type" value="mRNA"/>
</dbReference>
<dbReference type="EMBL" id="AK311999">
    <property type="protein sequence ID" value="BAG34937.1"/>
    <property type="molecule type" value="mRNA"/>
</dbReference>
<dbReference type="EMBL" id="AC096649">
    <property type="protein sequence ID" value="AAX88970.1"/>
    <property type="molecule type" value="Genomic_DNA"/>
</dbReference>
<dbReference type="EMBL" id="CH471058">
    <property type="protein sequence ID" value="EAX11106.1"/>
    <property type="molecule type" value="Genomic_DNA"/>
</dbReference>
<dbReference type="EMBL" id="CH471058">
    <property type="protein sequence ID" value="EAX11107.1"/>
    <property type="molecule type" value="Genomic_DNA"/>
</dbReference>
<dbReference type="EMBL" id="BC106881">
    <property type="protein sequence ID" value="AAI06882.1"/>
    <property type="molecule type" value="mRNA"/>
</dbReference>
<dbReference type="CCDS" id="CCDS2263.1"/>
<dbReference type="PIR" id="I38612">
    <property type="entry name" value="I38612"/>
</dbReference>
<dbReference type="RefSeq" id="NP_001002258.1">
    <property type="nucleotide sequence ID" value="NM_001002258.5"/>
</dbReference>
<dbReference type="RefSeq" id="NP_001680.1">
    <property type="nucleotide sequence ID" value="NM_001689.5"/>
</dbReference>
<dbReference type="SMR" id="P48201"/>
<dbReference type="BioGRID" id="107003">
    <property type="interactions" value="29"/>
</dbReference>
<dbReference type="ComplexPortal" id="CPX-6151">
    <property type="entry name" value="Mitochondrial proton-transporting ATP synthase complex"/>
</dbReference>
<dbReference type="FunCoup" id="P48201">
    <property type="interactions" value="551"/>
</dbReference>
<dbReference type="IntAct" id="P48201">
    <property type="interactions" value="12"/>
</dbReference>
<dbReference type="STRING" id="9606.ENSP00000284727"/>
<dbReference type="TCDB" id="3.A.2.1.15">
    <property type="family name" value="the h+- or na+-translocating f-type, v-type and a-type atpase (f-atpase) superfamily"/>
</dbReference>
<dbReference type="GlyGen" id="P48201">
    <property type="glycosylation" value="1 site, 1 O-linked glycan (1 site)"/>
</dbReference>
<dbReference type="iPTMnet" id="P48201"/>
<dbReference type="PhosphoSitePlus" id="P48201"/>
<dbReference type="BioMuta" id="ATP5G3"/>
<dbReference type="DMDM" id="1352048"/>
<dbReference type="jPOST" id="P48201"/>
<dbReference type="MassIVE" id="P48201"/>
<dbReference type="PaxDb" id="9606-ENSP00000284727"/>
<dbReference type="PeptideAtlas" id="P48201"/>
<dbReference type="ProteomicsDB" id="55872"/>
<dbReference type="Pumba" id="P48201"/>
<dbReference type="TopDownProteomics" id="P48201"/>
<dbReference type="Antibodypedia" id="53295">
    <property type="antibodies" value="47 antibodies from 17 providers"/>
</dbReference>
<dbReference type="DNASU" id="518"/>
<dbReference type="Ensembl" id="ENST00000284727.9">
    <property type="protein sequence ID" value="ENSP00000284727.4"/>
    <property type="gene ID" value="ENSG00000154518.10"/>
</dbReference>
<dbReference type="Ensembl" id="ENST00000392541.3">
    <property type="protein sequence ID" value="ENSP00000376324.3"/>
    <property type="gene ID" value="ENSG00000154518.10"/>
</dbReference>
<dbReference type="Ensembl" id="ENST00000409194.5">
    <property type="protein sequence ID" value="ENSP00000387317.1"/>
    <property type="gene ID" value="ENSG00000154518.10"/>
</dbReference>
<dbReference type="GeneID" id="518"/>
<dbReference type="KEGG" id="hsa:518"/>
<dbReference type="MANE-Select" id="ENST00000284727.9">
    <property type="protein sequence ID" value="ENSP00000284727.4"/>
    <property type="RefSeq nucleotide sequence ID" value="NM_001689.5"/>
    <property type="RefSeq protein sequence ID" value="NP_001680.1"/>
</dbReference>
<dbReference type="UCSC" id="uc002ujz.5">
    <property type="organism name" value="human"/>
</dbReference>
<dbReference type="AGR" id="HGNC:843"/>
<dbReference type="CTD" id="518"/>
<dbReference type="DisGeNET" id="518"/>
<dbReference type="GeneCards" id="ATP5MC3"/>
<dbReference type="HGNC" id="HGNC:843">
    <property type="gene designation" value="ATP5MC3"/>
</dbReference>
<dbReference type="HPA" id="ENSG00000154518">
    <property type="expression patterns" value="Tissue enhanced (heart muscle, tongue)"/>
</dbReference>
<dbReference type="MalaCards" id="ATP5MC3"/>
<dbReference type="MIM" id="602736">
    <property type="type" value="gene"/>
</dbReference>
<dbReference type="MIM" id="619681">
    <property type="type" value="phenotype"/>
</dbReference>
<dbReference type="neXtProt" id="NX_P48201"/>
<dbReference type="OpenTargets" id="ENSG00000154518"/>
<dbReference type="PharmGKB" id="PA25133"/>
<dbReference type="VEuPathDB" id="HostDB:ENSG00000154518"/>
<dbReference type="eggNOG" id="KOG3025">
    <property type="taxonomic scope" value="Eukaryota"/>
</dbReference>
<dbReference type="GeneTree" id="ENSGT00940000154298"/>
<dbReference type="HOGENOM" id="CLU_116822_1_0_1"/>
<dbReference type="InParanoid" id="P48201"/>
<dbReference type="OMA" id="CTSALIR"/>
<dbReference type="OrthoDB" id="438052at2759"/>
<dbReference type="PAN-GO" id="P48201">
    <property type="GO annotations" value="2 GO annotations based on evolutionary models"/>
</dbReference>
<dbReference type="PhylomeDB" id="P48201"/>
<dbReference type="TreeFam" id="TF300140"/>
<dbReference type="BioCyc" id="MetaCyc:ENSG00000154518-MONOMER"/>
<dbReference type="PathwayCommons" id="P48201"/>
<dbReference type="Reactome" id="R-HSA-163210">
    <property type="pathway name" value="Formation of ATP by chemiosmotic coupling"/>
</dbReference>
<dbReference type="Reactome" id="R-HSA-8949613">
    <property type="pathway name" value="Cristae formation"/>
</dbReference>
<dbReference type="SignaLink" id="P48201"/>
<dbReference type="BioGRID-ORCS" id="518">
    <property type="hits" value="13 hits in 1154 CRISPR screens"/>
</dbReference>
<dbReference type="ChiTaRS" id="ATP5G3">
    <property type="organism name" value="human"/>
</dbReference>
<dbReference type="GeneWiki" id="ATP5G3"/>
<dbReference type="GenomeRNAi" id="518"/>
<dbReference type="Pharos" id="P48201">
    <property type="development level" value="Tdark"/>
</dbReference>
<dbReference type="PRO" id="PR:P48201"/>
<dbReference type="Proteomes" id="UP000005640">
    <property type="component" value="Chromosome 2"/>
</dbReference>
<dbReference type="RNAct" id="P48201">
    <property type="molecule type" value="protein"/>
</dbReference>
<dbReference type="Bgee" id="ENSG00000154518">
    <property type="expression patterns" value="Expressed in heart right ventricle and 215 other cell types or tissues"/>
</dbReference>
<dbReference type="GO" id="GO:0005743">
    <property type="term" value="C:mitochondrial inner membrane"/>
    <property type="evidence" value="ECO:0000304"/>
    <property type="project" value="Reactome"/>
</dbReference>
<dbReference type="GO" id="GO:0005739">
    <property type="term" value="C:mitochondrion"/>
    <property type="evidence" value="ECO:0006056"/>
    <property type="project" value="FlyBase"/>
</dbReference>
<dbReference type="GO" id="GO:0045259">
    <property type="term" value="C:proton-transporting ATP synthase complex"/>
    <property type="evidence" value="ECO:0000303"/>
    <property type="project" value="ComplexPortal"/>
</dbReference>
<dbReference type="GO" id="GO:0033177">
    <property type="term" value="C:proton-transporting two-sector ATPase complex, proton-transporting domain"/>
    <property type="evidence" value="ECO:0007669"/>
    <property type="project" value="InterPro"/>
</dbReference>
<dbReference type="GO" id="GO:0008289">
    <property type="term" value="F:lipid binding"/>
    <property type="evidence" value="ECO:0007669"/>
    <property type="project" value="UniProtKB-KW"/>
</dbReference>
<dbReference type="GO" id="GO:0015078">
    <property type="term" value="F:proton transmembrane transporter activity"/>
    <property type="evidence" value="ECO:0007669"/>
    <property type="project" value="InterPro"/>
</dbReference>
<dbReference type="GO" id="GO:0015986">
    <property type="term" value="P:proton motive force-driven ATP synthesis"/>
    <property type="evidence" value="ECO:0000318"/>
    <property type="project" value="GO_Central"/>
</dbReference>
<dbReference type="CDD" id="cd18182">
    <property type="entry name" value="ATP-synt_Fo_c_ATP5G3"/>
    <property type="match status" value="1"/>
</dbReference>
<dbReference type="FunFam" id="1.20.20.10:FF:000003">
    <property type="entry name" value="Atp synthase f complex subunit mitochondrial"/>
    <property type="match status" value="1"/>
</dbReference>
<dbReference type="Gene3D" id="1.20.20.10">
    <property type="entry name" value="F1F0 ATP synthase subunit C"/>
    <property type="match status" value="1"/>
</dbReference>
<dbReference type="HAMAP" id="MF_01396">
    <property type="entry name" value="ATP_synth_c_bact"/>
    <property type="match status" value="1"/>
</dbReference>
<dbReference type="InterPro" id="IPR000454">
    <property type="entry name" value="ATP_synth_F0_csu"/>
</dbReference>
<dbReference type="InterPro" id="IPR020537">
    <property type="entry name" value="ATP_synth_F0_csu_DDCD_BS"/>
</dbReference>
<dbReference type="InterPro" id="IPR038662">
    <property type="entry name" value="ATP_synth_F0_csu_sf"/>
</dbReference>
<dbReference type="InterPro" id="IPR002379">
    <property type="entry name" value="ATPase_proteolipid_c-like_dom"/>
</dbReference>
<dbReference type="InterPro" id="IPR035921">
    <property type="entry name" value="F/V-ATP_Csub_sf"/>
</dbReference>
<dbReference type="PANTHER" id="PTHR10031">
    <property type="entry name" value="ATP SYNTHASE LIPID-BINDING PROTEIN, MITOCHONDRIAL"/>
    <property type="match status" value="1"/>
</dbReference>
<dbReference type="PANTHER" id="PTHR10031:SF0">
    <property type="entry name" value="ATPASE PROTEIN 9"/>
    <property type="match status" value="1"/>
</dbReference>
<dbReference type="Pfam" id="PF00137">
    <property type="entry name" value="ATP-synt_C"/>
    <property type="match status" value="1"/>
</dbReference>
<dbReference type="PRINTS" id="PR00124">
    <property type="entry name" value="ATPASEC"/>
</dbReference>
<dbReference type="SUPFAM" id="SSF81333">
    <property type="entry name" value="F1F0 ATP synthase subunit C"/>
    <property type="match status" value="1"/>
</dbReference>
<dbReference type="PROSITE" id="PS00605">
    <property type="entry name" value="ATPASE_C"/>
    <property type="match status" value="1"/>
</dbReference>
<organism>
    <name type="scientific">Homo sapiens</name>
    <name type="common">Human</name>
    <dbReference type="NCBI Taxonomy" id="9606"/>
    <lineage>
        <taxon>Eukaryota</taxon>
        <taxon>Metazoa</taxon>
        <taxon>Chordata</taxon>
        <taxon>Craniata</taxon>
        <taxon>Vertebrata</taxon>
        <taxon>Euteleostomi</taxon>
        <taxon>Mammalia</taxon>
        <taxon>Eutheria</taxon>
        <taxon>Euarchontoglires</taxon>
        <taxon>Primates</taxon>
        <taxon>Haplorrhini</taxon>
        <taxon>Catarrhini</taxon>
        <taxon>Hominidae</taxon>
        <taxon>Homo</taxon>
    </lineage>
</organism>
<name>AT5G3_HUMAN</name>
<accession>P48201</accession>
<accession>B2R4Z0</accession>
<accession>D3DPF0</accession>
<accession>Q4ZFX7</accession>
<gene>
    <name evidence="8" type="primary">ATP5MC3</name>
    <name evidence="8" type="synonym">ATP5G3</name>
</gene>
<protein>
    <recommendedName>
        <fullName evidence="7">ATP synthase F(0) complex subunit C3, mitochondrial</fullName>
    </recommendedName>
    <alternativeName>
        <fullName>ATP synthase lipid-binding protein</fullName>
    </alternativeName>
    <alternativeName>
        <fullName evidence="8">ATP synthase membrane subunit c locus 3</fullName>
    </alternativeName>
    <alternativeName>
        <fullName>ATP synthase proteolipid P3</fullName>
    </alternativeName>
    <alternativeName>
        <fullName>ATP synthase proton-transporting mitochondrial F(0) complex subunit C3</fullName>
    </alternativeName>
    <alternativeName>
        <fullName>ATPase protein 9</fullName>
    </alternativeName>
    <alternativeName>
        <fullName>ATPase subunit c</fullName>
    </alternativeName>
</protein>
<proteinExistence type="evidence at protein level"/>
<reference key="1">
    <citation type="journal article" date="1994" name="Genomics">
        <title>Sequence analysis and mapping of a novel human mitochondrial ATP synthase subunit 9 cDNA (ATP5G3).</title>
        <authorList>
            <person name="Yan W.L."/>
            <person name="Lerner T.J."/>
            <person name="Haines J.L."/>
            <person name="Gusella J.F."/>
        </authorList>
    </citation>
    <scope>NUCLEOTIDE SEQUENCE [MRNA]</scope>
    <source>
        <tissue>Liver</tissue>
    </source>
</reference>
<reference key="2">
    <citation type="journal article" date="2004" name="Nat. Genet.">
        <title>Complete sequencing and characterization of 21,243 full-length human cDNAs.</title>
        <authorList>
            <person name="Ota T."/>
            <person name="Suzuki Y."/>
            <person name="Nishikawa T."/>
            <person name="Otsuki T."/>
            <person name="Sugiyama T."/>
            <person name="Irie R."/>
            <person name="Wakamatsu A."/>
            <person name="Hayashi K."/>
            <person name="Sato H."/>
            <person name="Nagai K."/>
            <person name="Kimura K."/>
            <person name="Makita H."/>
            <person name="Sekine M."/>
            <person name="Obayashi M."/>
            <person name="Nishi T."/>
            <person name="Shibahara T."/>
            <person name="Tanaka T."/>
            <person name="Ishii S."/>
            <person name="Yamamoto J."/>
            <person name="Saito K."/>
            <person name="Kawai Y."/>
            <person name="Isono Y."/>
            <person name="Nakamura Y."/>
            <person name="Nagahari K."/>
            <person name="Murakami K."/>
            <person name="Yasuda T."/>
            <person name="Iwayanagi T."/>
            <person name="Wagatsuma M."/>
            <person name="Shiratori A."/>
            <person name="Sudo H."/>
            <person name="Hosoiri T."/>
            <person name="Kaku Y."/>
            <person name="Kodaira H."/>
            <person name="Kondo H."/>
            <person name="Sugawara M."/>
            <person name="Takahashi M."/>
            <person name="Kanda K."/>
            <person name="Yokoi T."/>
            <person name="Furuya T."/>
            <person name="Kikkawa E."/>
            <person name="Omura Y."/>
            <person name="Abe K."/>
            <person name="Kamihara K."/>
            <person name="Katsuta N."/>
            <person name="Sato K."/>
            <person name="Tanikawa M."/>
            <person name="Yamazaki M."/>
            <person name="Ninomiya K."/>
            <person name="Ishibashi T."/>
            <person name="Yamashita H."/>
            <person name="Murakawa K."/>
            <person name="Fujimori K."/>
            <person name="Tanai H."/>
            <person name="Kimata M."/>
            <person name="Watanabe M."/>
            <person name="Hiraoka S."/>
            <person name="Chiba Y."/>
            <person name="Ishida S."/>
            <person name="Ono Y."/>
            <person name="Takiguchi S."/>
            <person name="Watanabe S."/>
            <person name="Yosida M."/>
            <person name="Hotuta T."/>
            <person name="Kusano J."/>
            <person name="Kanehori K."/>
            <person name="Takahashi-Fujii A."/>
            <person name="Hara H."/>
            <person name="Tanase T.-O."/>
            <person name="Nomura Y."/>
            <person name="Togiya S."/>
            <person name="Komai F."/>
            <person name="Hara R."/>
            <person name="Takeuchi K."/>
            <person name="Arita M."/>
            <person name="Imose N."/>
            <person name="Musashino K."/>
            <person name="Yuuki H."/>
            <person name="Oshima A."/>
            <person name="Sasaki N."/>
            <person name="Aotsuka S."/>
            <person name="Yoshikawa Y."/>
            <person name="Matsunawa H."/>
            <person name="Ichihara T."/>
            <person name="Shiohata N."/>
            <person name="Sano S."/>
            <person name="Moriya S."/>
            <person name="Momiyama H."/>
            <person name="Satoh N."/>
            <person name="Takami S."/>
            <person name="Terashima Y."/>
            <person name="Suzuki O."/>
            <person name="Nakagawa S."/>
            <person name="Senoh A."/>
            <person name="Mizoguchi H."/>
            <person name="Goto Y."/>
            <person name="Shimizu F."/>
            <person name="Wakebe H."/>
            <person name="Hishigaki H."/>
            <person name="Watanabe T."/>
            <person name="Sugiyama A."/>
            <person name="Takemoto M."/>
            <person name="Kawakami B."/>
            <person name="Yamazaki M."/>
            <person name="Watanabe K."/>
            <person name="Kumagai A."/>
            <person name="Itakura S."/>
            <person name="Fukuzumi Y."/>
            <person name="Fujimori Y."/>
            <person name="Komiyama M."/>
            <person name="Tashiro H."/>
            <person name="Tanigami A."/>
            <person name="Fujiwara T."/>
            <person name="Ono T."/>
            <person name="Yamada K."/>
            <person name="Fujii Y."/>
            <person name="Ozaki K."/>
            <person name="Hirao M."/>
            <person name="Ohmori Y."/>
            <person name="Kawabata A."/>
            <person name="Hikiji T."/>
            <person name="Kobatake N."/>
            <person name="Inagaki H."/>
            <person name="Ikema Y."/>
            <person name="Okamoto S."/>
            <person name="Okitani R."/>
            <person name="Kawakami T."/>
            <person name="Noguchi S."/>
            <person name="Itoh T."/>
            <person name="Shigeta K."/>
            <person name="Senba T."/>
            <person name="Matsumura K."/>
            <person name="Nakajima Y."/>
            <person name="Mizuno T."/>
            <person name="Morinaga M."/>
            <person name="Sasaki M."/>
            <person name="Togashi T."/>
            <person name="Oyama M."/>
            <person name="Hata H."/>
            <person name="Watanabe M."/>
            <person name="Komatsu T."/>
            <person name="Mizushima-Sugano J."/>
            <person name="Satoh T."/>
            <person name="Shirai Y."/>
            <person name="Takahashi Y."/>
            <person name="Nakagawa K."/>
            <person name="Okumura K."/>
            <person name="Nagase T."/>
            <person name="Nomura N."/>
            <person name="Kikuchi H."/>
            <person name="Masuho Y."/>
            <person name="Yamashita R."/>
            <person name="Nakai K."/>
            <person name="Yada T."/>
            <person name="Nakamura Y."/>
            <person name="Ohara O."/>
            <person name="Isogai T."/>
            <person name="Sugano S."/>
        </authorList>
    </citation>
    <scope>NUCLEOTIDE SEQUENCE [LARGE SCALE MRNA]</scope>
    <source>
        <tissue>Subthalamic nucleus</tissue>
    </source>
</reference>
<reference key="3">
    <citation type="journal article" date="2005" name="Nature">
        <title>Generation and annotation of the DNA sequences of human chromosomes 2 and 4.</title>
        <authorList>
            <person name="Hillier L.W."/>
            <person name="Graves T.A."/>
            <person name="Fulton R.S."/>
            <person name="Fulton L.A."/>
            <person name="Pepin K.H."/>
            <person name="Minx P."/>
            <person name="Wagner-McPherson C."/>
            <person name="Layman D."/>
            <person name="Wylie K."/>
            <person name="Sekhon M."/>
            <person name="Becker M.C."/>
            <person name="Fewell G.A."/>
            <person name="Delehaunty K.D."/>
            <person name="Miner T.L."/>
            <person name="Nash W.E."/>
            <person name="Kremitzki C."/>
            <person name="Oddy L."/>
            <person name="Du H."/>
            <person name="Sun H."/>
            <person name="Bradshaw-Cordum H."/>
            <person name="Ali J."/>
            <person name="Carter J."/>
            <person name="Cordes M."/>
            <person name="Harris A."/>
            <person name="Isak A."/>
            <person name="van Brunt A."/>
            <person name="Nguyen C."/>
            <person name="Du F."/>
            <person name="Courtney L."/>
            <person name="Kalicki J."/>
            <person name="Ozersky P."/>
            <person name="Abbott S."/>
            <person name="Armstrong J."/>
            <person name="Belter E.A."/>
            <person name="Caruso L."/>
            <person name="Cedroni M."/>
            <person name="Cotton M."/>
            <person name="Davidson T."/>
            <person name="Desai A."/>
            <person name="Elliott G."/>
            <person name="Erb T."/>
            <person name="Fronick C."/>
            <person name="Gaige T."/>
            <person name="Haakenson W."/>
            <person name="Haglund K."/>
            <person name="Holmes A."/>
            <person name="Harkins R."/>
            <person name="Kim K."/>
            <person name="Kruchowski S.S."/>
            <person name="Strong C.M."/>
            <person name="Grewal N."/>
            <person name="Goyea E."/>
            <person name="Hou S."/>
            <person name="Levy A."/>
            <person name="Martinka S."/>
            <person name="Mead K."/>
            <person name="McLellan M.D."/>
            <person name="Meyer R."/>
            <person name="Randall-Maher J."/>
            <person name="Tomlinson C."/>
            <person name="Dauphin-Kohlberg S."/>
            <person name="Kozlowicz-Reilly A."/>
            <person name="Shah N."/>
            <person name="Swearengen-Shahid S."/>
            <person name="Snider J."/>
            <person name="Strong J.T."/>
            <person name="Thompson J."/>
            <person name="Yoakum M."/>
            <person name="Leonard S."/>
            <person name="Pearman C."/>
            <person name="Trani L."/>
            <person name="Radionenko M."/>
            <person name="Waligorski J.E."/>
            <person name="Wang C."/>
            <person name="Rock S.M."/>
            <person name="Tin-Wollam A.-M."/>
            <person name="Maupin R."/>
            <person name="Latreille P."/>
            <person name="Wendl M.C."/>
            <person name="Yang S.-P."/>
            <person name="Pohl C."/>
            <person name="Wallis J.W."/>
            <person name="Spieth J."/>
            <person name="Bieri T.A."/>
            <person name="Berkowicz N."/>
            <person name="Nelson J.O."/>
            <person name="Osborne J."/>
            <person name="Ding L."/>
            <person name="Meyer R."/>
            <person name="Sabo A."/>
            <person name="Shotland Y."/>
            <person name="Sinha P."/>
            <person name="Wohldmann P.E."/>
            <person name="Cook L.L."/>
            <person name="Hickenbotham M.T."/>
            <person name="Eldred J."/>
            <person name="Williams D."/>
            <person name="Jones T.A."/>
            <person name="She X."/>
            <person name="Ciccarelli F.D."/>
            <person name="Izaurralde E."/>
            <person name="Taylor J."/>
            <person name="Schmutz J."/>
            <person name="Myers R.M."/>
            <person name="Cox D.R."/>
            <person name="Huang X."/>
            <person name="McPherson J.D."/>
            <person name="Mardis E.R."/>
            <person name="Clifton S.W."/>
            <person name="Warren W.C."/>
            <person name="Chinwalla A.T."/>
            <person name="Eddy S.R."/>
            <person name="Marra M.A."/>
            <person name="Ovcharenko I."/>
            <person name="Furey T.S."/>
            <person name="Miller W."/>
            <person name="Eichler E.E."/>
            <person name="Bork P."/>
            <person name="Suyama M."/>
            <person name="Torrents D."/>
            <person name="Waterston R.H."/>
            <person name="Wilson R.K."/>
        </authorList>
    </citation>
    <scope>NUCLEOTIDE SEQUENCE [LARGE SCALE GENOMIC DNA]</scope>
</reference>
<reference key="4">
    <citation type="submission" date="2005-09" db="EMBL/GenBank/DDBJ databases">
        <authorList>
            <person name="Mural R.J."/>
            <person name="Istrail S."/>
            <person name="Sutton G.G."/>
            <person name="Florea L."/>
            <person name="Halpern A.L."/>
            <person name="Mobarry C.M."/>
            <person name="Lippert R."/>
            <person name="Walenz B."/>
            <person name="Shatkay H."/>
            <person name="Dew I."/>
            <person name="Miller J.R."/>
            <person name="Flanigan M.J."/>
            <person name="Edwards N.J."/>
            <person name="Bolanos R."/>
            <person name="Fasulo D."/>
            <person name="Halldorsson B.V."/>
            <person name="Hannenhalli S."/>
            <person name="Turner R."/>
            <person name="Yooseph S."/>
            <person name="Lu F."/>
            <person name="Nusskern D.R."/>
            <person name="Shue B.C."/>
            <person name="Zheng X.H."/>
            <person name="Zhong F."/>
            <person name="Delcher A.L."/>
            <person name="Huson D.H."/>
            <person name="Kravitz S.A."/>
            <person name="Mouchard L."/>
            <person name="Reinert K."/>
            <person name="Remington K.A."/>
            <person name="Clark A.G."/>
            <person name="Waterman M.S."/>
            <person name="Eichler E.E."/>
            <person name="Adams M.D."/>
            <person name="Hunkapiller M.W."/>
            <person name="Myers E.W."/>
            <person name="Venter J.C."/>
        </authorList>
    </citation>
    <scope>NUCLEOTIDE SEQUENCE [LARGE SCALE GENOMIC DNA]</scope>
</reference>
<reference key="5">
    <citation type="journal article" date="2004" name="Genome Res.">
        <title>The status, quality, and expansion of the NIH full-length cDNA project: the Mammalian Gene Collection (MGC).</title>
        <authorList>
            <consortium name="The MGC Project Team"/>
        </authorList>
    </citation>
    <scope>NUCLEOTIDE SEQUENCE [LARGE SCALE MRNA]</scope>
</reference>
<reference key="6">
    <citation type="journal article" date="2019" name="J. Biol. Chem.">
        <title>Lysine methylation by the mitochondrial methyltransferase FAM173B optimizes the function of mitochondrial ATP synthase.</title>
        <authorList>
            <person name="Malecki J.M."/>
            <person name="Willemen H.L.D.M."/>
            <person name="Pinto R."/>
            <person name="Ho A.Y.Y."/>
            <person name="Moen A."/>
            <person name="Kjoenstad I.F."/>
            <person name="Burgering B.M.T."/>
            <person name="Zwartkruis F."/>
            <person name="Eijkelkamp N."/>
            <person name="Falnes P.O."/>
        </authorList>
    </citation>
    <scope>METHYLATION AT LYS-110</scope>
</reference>
<reference key="7">
    <citation type="journal article" date="2021" name="Proc. Natl. Acad. Sci. U.S.A.">
        <title>TMEM70 and TMEM242 help to assemble the rotor ring of human ATP synthase and interact with assembly factors for complex I.</title>
        <authorList>
            <person name="Carroll J."/>
            <person name="He J."/>
            <person name="Ding S."/>
            <person name="Fearnley I.M."/>
            <person name="Walker J.E."/>
        </authorList>
    </citation>
    <scope>INTERACTION WITH TMEM70 AND TMEM242</scope>
</reference>
<reference key="8">
    <citation type="journal article" date="2022" name="Mov. Disord.">
        <title>A Novel Variant of ATP5MC3 Associated with Both Dystonia and Spastic Paraplegia.</title>
        <authorList>
            <person name="Neilson D.E."/>
            <person name="Zech M."/>
            <person name="Hufnagel R.B."/>
            <person name="Slone J."/>
            <person name="Wang X."/>
            <person name="Homan S."/>
            <person name="Gutzwiller L.M."/>
            <person name="Leslie E.J."/>
            <person name="Leslie N.D."/>
            <person name="Xiao J."/>
            <person name="Hedera P."/>
            <person name="LeDoux M.S."/>
            <person name="Gebelein B."/>
            <person name="Wilbert F."/>
            <person name="Eckenweiler M."/>
            <person name="Winkelmann J."/>
            <person name="Gilbert D.L."/>
            <person name="Huang T."/>
        </authorList>
    </citation>
    <scope>VARIANT DYTSPG LYS-106</scope>
    <scope>INVOLVEMENT IN DYTSPG</scope>
</reference>
<reference key="9">
    <citation type="journal article" date="2022" name="Ann. Neurol.">
        <title>Variants in Mitochondrial ATP Synthase Cause Variable Neurologic Phenotypes.</title>
        <authorList>
            <person name="Zech M."/>
            <person name="Kopajtich R."/>
            <person name="Steinbruecker K."/>
            <person name="Bris C."/>
            <person name="Gueguen N."/>
            <person name="Feichtinger R.G."/>
            <person name="Achleitner M.T."/>
            <person name="Duzkale N."/>
            <person name="Perivier M."/>
            <person name="Koch J."/>
            <person name="Engelhardt H."/>
            <person name="Freisinger P."/>
            <person name="Wagner M."/>
            <person name="Brunet T."/>
            <person name="Berutti R."/>
            <person name="Smirnov D."/>
            <person name="Navaratnarajah T."/>
            <person name="Rodenburg R.J.T."/>
            <person name="Pais L.S."/>
            <person name="Austin-Tse C."/>
            <person name="O'Leary M."/>
            <person name="Boesch S."/>
            <person name="Jech R."/>
            <person name="Bakhtiari S."/>
            <person name="Jin S.C."/>
            <person name="Wilbert F."/>
            <person name="Kruer M.C."/>
            <person name="Wortmann S.B."/>
            <person name="Eckenweiler M."/>
            <person name="Mayr J.A."/>
            <person name="Distelmaier F."/>
            <person name="Steinfeld R."/>
            <person name="Winkelmann J."/>
            <person name="Prokisch H."/>
        </authorList>
    </citation>
    <scope>VARIANTS DYTSPG VAL-79; LYS-106 AND ALA-107</scope>
</reference>
<keyword id="KW-0138">CF(0)</keyword>
<keyword id="KW-0225">Disease variant</keyword>
<keyword id="KW-1023">Dystonia</keyword>
<keyword id="KW-0890">Hereditary spastic paraplegia</keyword>
<keyword id="KW-0375">Hydrogen ion transport</keyword>
<keyword id="KW-0406">Ion transport</keyword>
<keyword id="KW-0446">Lipid-binding</keyword>
<keyword id="KW-0472">Membrane</keyword>
<keyword id="KW-0488">Methylation</keyword>
<keyword id="KW-0496">Mitochondrion</keyword>
<keyword id="KW-0523">Neurodegeneration</keyword>
<keyword id="KW-1267">Proteomics identification</keyword>
<keyword id="KW-1185">Reference proteome</keyword>
<keyword id="KW-0809">Transit peptide</keyword>
<keyword id="KW-0812">Transmembrane</keyword>
<keyword id="KW-1133">Transmembrane helix</keyword>
<keyword id="KW-0813">Transport</keyword>
<comment type="function">
    <text>Mitochondrial membrane ATP synthase (F(1)F(0) ATP synthase or Complex V) produces ATP from ADP in the presence of a proton gradient across the membrane which is generated by electron transport complexes of the respiratory chain. F-type ATPases consist of two structural domains, F(1) - containing the extramembraneous catalytic core and F(0) - containing the membrane proton channel, linked together by a central stalk and a peripheral stalk. During catalysis, ATP synthesis in the catalytic domain of F(1) is coupled via a rotary mechanism of the central stalk subunits to proton translocation. Part of the complex F(0) domain. A homomeric c-ring of probably 10 subunits is part of the complex rotary element.</text>
</comment>
<comment type="subunit">
    <text evidence="4">F-type ATPases have 2 components, CF(1) - the catalytic core - and CF(0) - the membrane proton channel. CF(1) has five subunits: alpha(3), beta(3), gamma(1), delta(1), epsilon(1). CF(0) has three main subunits: a, b and c. Interacts with TMEM70 and TMEM242 (PubMed:33753518).</text>
</comment>
<comment type="subcellular location">
    <subcellularLocation>
        <location>Mitochondrion membrane</location>
        <topology>Multi-pass membrane protein</topology>
    </subcellularLocation>
</comment>
<comment type="PTM">
    <text evidence="3">Trimethylated by ATPSCKMT at Lys-110. Methylation is required for proper incorporation of the C subunit into the ATP synthase complex and mitochondrial respiration.</text>
</comment>
<comment type="disease" evidence="5 6">
    <disease id="DI-06301">
        <name>Dystonia, early-onset, and/or spastic paraplegia</name>
        <acronym>DYTSPG</acronym>
        <description>An autosomal dominant, highly penetrant movement disorder characterized by spastic paraplegia and/or dystonia to varying degrees in affected individuals. Cognition is not affected. There is high intra- and interfamilial variability in phenotype and age of onset. Some patients have onset of progressive focal or generalized dystonia in the first decade, whereas others develop progressive spastic paraplegia as adults. Some affected individuals have manifestations of both disorders.</description>
        <dbReference type="MIM" id="619681"/>
    </disease>
    <text>The disease is caused by variants affecting the gene represented in this entry.</text>
</comment>
<comment type="miscellaneous">
    <text>There are three genes which encode the mitochondrial ATP synthase proteolipid and they specify precursors with different import sequences but identical mature proteins. Is the major protein stored in the storage bodies of animals or humans affected with ceroid lipofuscinosis (Batten disease).</text>
</comment>
<comment type="similarity">
    <text evidence="7">Belongs to the ATPase C chain family.</text>
</comment>
<evidence type="ECO:0000250" key="1"/>
<evidence type="ECO:0000255" key="2"/>
<evidence type="ECO:0000269" key="3">
    <source>
    </source>
</evidence>
<evidence type="ECO:0000269" key="4">
    <source>
    </source>
</evidence>
<evidence type="ECO:0000269" key="5">
    <source>
    </source>
</evidence>
<evidence type="ECO:0000269" key="6">
    <source>
    </source>
</evidence>
<evidence type="ECO:0000305" key="7"/>
<evidence type="ECO:0000312" key="8">
    <source>
        <dbReference type="HGNC" id="HGNC:843"/>
    </source>
</evidence>
<feature type="transit peptide" description="Mitochondrion">
    <location>
        <begin position="1"/>
        <end position="67"/>
    </location>
</feature>
<feature type="chain" id="PRO_0000002567" description="ATP synthase F(0) complex subunit C3, mitochondrial">
    <location>
        <begin position="68"/>
        <end position="142"/>
    </location>
</feature>
<feature type="transmembrane region" description="Helical" evidence="2">
    <location>
        <begin position="83"/>
        <end position="103"/>
    </location>
</feature>
<feature type="transmembrane region" description="Helical" evidence="2">
    <location>
        <begin position="118"/>
        <end position="138"/>
    </location>
</feature>
<feature type="site" description="Reversibly protonated during proton transport" evidence="1">
    <location>
        <position position="125"/>
    </location>
</feature>
<feature type="modified residue" description="N6,N6,N6-trimethyllysine" evidence="3">
    <location>
        <position position="110"/>
    </location>
</feature>
<feature type="sequence variant" id="VAR_088544" description="In DYTSPG; likely pathogenic." evidence="6">
    <original>G</original>
    <variation>V</variation>
    <location>
        <position position="79"/>
    </location>
</feature>
<feature type="sequence variant" id="VAR_011922" description="In dbSNP:rs1802622.">
    <original>G</original>
    <variation>E</variation>
    <location>
        <position position="93"/>
    </location>
</feature>
<feature type="sequence variant" id="VAR_086710" description="In DYTSPG; likely pathogenic." evidence="5 6">
    <original>N</original>
    <variation>K</variation>
    <location>
        <position position="106"/>
    </location>
</feature>
<feature type="sequence variant" id="VAR_088545" description="In DYTSPG; likely pathogenic." evidence="6">
    <original>P</original>
    <variation>A</variation>
    <location>
        <position position="107"/>
    </location>
</feature>
<sequence length="142" mass="14693">MFACAKLACTPSLIRAGSRVAYRPISASVLSRPEASRTGEGSTVFNGAQNGVSQLIQREFQTSAISRDIDTAAKFIGAGAATVGVAGSGAGIGTVFGSLIIGYARNPSLKQQLFSYAILGFALSEAMGLFCLMVAFLILFAM</sequence>